<dbReference type="EMBL" id="AY456639">
    <property type="protein sequence ID" value="AAS13485.1"/>
    <property type="molecule type" value="mRNA"/>
</dbReference>
<dbReference type="EMBL" id="AL591893">
    <property type="status" value="NOT_ANNOTATED_CDS"/>
    <property type="molecule type" value="Genomic_DNA"/>
</dbReference>
<dbReference type="EMBL" id="CH471121">
    <property type="protein sequence ID" value="EAW53391.1"/>
    <property type="molecule type" value="Genomic_DNA"/>
</dbReference>
<dbReference type="EMBL" id="BC137493">
    <property type="protein sequence ID" value="AAI37494.1"/>
    <property type="molecule type" value="mRNA"/>
</dbReference>
<dbReference type="CCDS" id="CCDS30857.1"/>
<dbReference type="RefSeq" id="NP_001008536.1">
    <property type="nucleotide sequence ID" value="NM_001008536.2"/>
</dbReference>
<dbReference type="SMR" id="Q5QJ38"/>
<dbReference type="BioGRID" id="126005">
    <property type="interactions" value="7"/>
</dbReference>
<dbReference type="FunCoup" id="Q5QJ38">
    <property type="interactions" value="24"/>
</dbReference>
<dbReference type="IntAct" id="Q5QJ38">
    <property type="interactions" value="3"/>
</dbReference>
<dbReference type="STRING" id="9606.ENSP00000357796"/>
<dbReference type="GlyGen" id="Q5QJ38">
    <property type="glycosylation" value="2 sites, 1 O-linked glycan (2 sites)"/>
</dbReference>
<dbReference type="iPTMnet" id="Q5QJ38"/>
<dbReference type="PhosphoSitePlus" id="Q5QJ38"/>
<dbReference type="BioMuta" id="TCHHL1"/>
<dbReference type="DMDM" id="74743107"/>
<dbReference type="MassIVE" id="Q5QJ38"/>
<dbReference type="PaxDb" id="9606-ENSP00000357796"/>
<dbReference type="PeptideAtlas" id="Q5QJ38"/>
<dbReference type="ProteomicsDB" id="63618"/>
<dbReference type="Antibodypedia" id="34081">
    <property type="antibodies" value="108 antibodies from 24 providers"/>
</dbReference>
<dbReference type="DNASU" id="126637"/>
<dbReference type="Ensembl" id="ENST00000368806.2">
    <property type="protein sequence ID" value="ENSP00000357796.1"/>
    <property type="gene ID" value="ENSG00000182898.4"/>
</dbReference>
<dbReference type="GeneID" id="126637"/>
<dbReference type="KEGG" id="hsa:126637"/>
<dbReference type="MANE-Select" id="ENST00000368806.2">
    <property type="protein sequence ID" value="ENSP00000357796.1"/>
    <property type="RefSeq nucleotide sequence ID" value="NM_001008536.2"/>
    <property type="RefSeq protein sequence ID" value="NP_001008536.1"/>
</dbReference>
<dbReference type="UCSC" id="uc001ezo.1">
    <property type="organism name" value="human"/>
</dbReference>
<dbReference type="AGR" id="HGNC:31796"/>
<dbReference type="CTD" id="126637"/>
<dbReference type="DisGeNET" id="126637"/>
<dbReference type="GeneCards" id="TCHHL1"/>
<dbReference type="HGNC" id="HGNC:31796">
    <property type="gene designation" value="TCHHL1"/>
</dbReference>
<dbReference type="HPA" id="ENSG00000182898">
    <property type="expression patterns" value="Not detected"/>
</dbReference>
<dbReference type="neXtProt" id="NX_Q5QJ38"/>
<dbReference type="OpenTargets" id="ENSG00000182898"/>
<dbReference type="PharmGKB" id="PA134982007"/>
<dbReference type="VEuPathDB" id="HostDB:ENSG00000182898"/>
<dbReference type="eggNOG" id="ENOG502RU01">
    <property type="taxonomic scope" value="Eukaryota"/>
</dbReference>
<dbReference type="GeneTree" id="ENSGT00940000162966"/>
<dbReference type="HOGENOM" id="CLU_017117_1_0_1"/>
<dbReference type="InParanoid" id="Q5QJ38"/>
<dbReference type="OMA" id="REAKTHN"/>
<dbReference type="OrthoDB" id="9450604at2759"/>
<dbReference type="PAN-GO" id="Q5QJ38">
    <property type="GO annotations" value="0 GO annotations based on evolutionary models"/>
</dbReference>
<dbReference type="PhylomeDB" id="Q5QJ38"/>
<dbReference type="TreeFam" id="TF337503"/>
<dbReference type="PathwayCommons" id="Q5QJ38"/>
<dbReference type="BioGRID-ORCS" id="126637">
    <property type="hits" value="9 hits in 1138 CRISPR screens"/>
</dbReference>
<dbReference type="GenomeRNAi" id="126637"/>
<dbReference type="Pharos" id="Q5QJ38">
    <property type="development level" value="Tbio"/>
</dbReference>
<dbReference type="PRO" id="PR:Q5QJ38"/>
<dbReference type="Proteomes" id="UP000005640">
    <property type="component" value="Chromosome 1"/>
</dbReference>
<dbReference type="RNAct" id="Q5QJ38">
    <property type="molecule type" value="protein"/>
</dbReference>
<dbReference type="Bgee" id="ENSG00000182898">
    <property type="expression patterns" value="Expressed in skin of abdomen and 2 other cell types or tissues"/>
</dbReference>
<dbReference type="GO" id="GO:0046914">
    <property type="term" value="F:transition metal ion binding"/>
    <property type="evidence" value="ECO:0007669"/>
    <property type="project" value="InterPro"/>
</dbReference>
<dbReference type="CDD" id="cd00213">
    <property type="entry name" value="S-100"/>
    <property type="match status" value="1"/>
</dbReference>
<dbReference type="Gene3D" id="1.10.238.10">
    <property type="entry name" value="EF-hand"/>
    <property type="match status" value="1"/>
</dbReference>
<dbReference type="InterPro" id="IPR011992">
    <property type="entry name" value="EF-hand-dom_pair"/>
</dbReference>
<dbReference type="InterPro" id="IPR034325">
    <property type="entry name" value="S-100_dom"/>
</dbReference>
<dbReference type="InterPro" id="IPR013787">
    <property type="entry name" value="S100_Ca-bd_sub"/>
</dbReference>
<dbReference type="InterPro" id="IPR042937">
    <property type="entry name" value="TCHHL1"/>
</dbReference>
<dbReference type="PANTHER" id="PTHR47612">
    <property type="entry name" value="TRICHOHYALIN-LIKE PROTEIN 1"/>
    <property type="match status" value="1"/>
</dbReference>
<dbReference type="PANTHER" id="PTHR47612:SF1">
    <property type="entry name" value="TRICHOHYALIN-LIKE PROTEIN 1"/>
    <property type="match status" value="1"/>
</dbReference>
<dbReference type="Pfam" id="PF01023">
    <property type="entry name" value="S_100"/>
    <property type="match status" value="1"/>
</dbReference>
<dbReference type="SMART" id="SM01394">
    <property type="entry name" value="S_100"/>
    <property type="match status" value="1"/>
</dbReference>
<dbReference type="SUPFAM" id="SSF47473">
    <property type="entry name" value="EF-hand"/>
    <property type="match status" value="1"/>
</dbReference>
<gene>
    <name type="primary">TCHHL1</name>
    <name type="synonym">S100A17</name>
    <name type="synonym">THHL1</name>
</gene>
<accession>Q5QJ38</accession>
<accession>B2RPK8</accession>
<accession>Q5VTJ9</accession>
<protein>
    <recommendedName>
        <fullName>Trichohyalin-like protein 1</fullName>
    </recommendedName>
    <alternativeName>
        <fullName>Basalin</fullName>
    </alternativeName>
    <alternativeName>
        <fullName>Protein S100-A17</fullName>
    </alternativeName>
    <alternativeName>
        <fullName>S100 calcium-binding protein A17</fullName>
    </alternativeName>
</protein>
<evidence type="ECO:0000256" key="1">
    <source>
        <dbReference type="SAM" id="MobiDB-lite"/>
    </source>
</evidence>
<evidence type="ECO:0000305" key="2"/>
<name>TCHL1_HUMAN</name>
<organism>
    <name type="scientific">Homo sapiens</name>
    <name type="common">Human</name>
    <dbReference type="NCBI Taxonomy" id="9606"/>
    <lineage>
        <taxon>Eukaryota</taxon>
        <taxon>Metazoa</taxon>
        <taxon>Chordata</taxon>
        <taxon>Craniata</taxon>
        <taxon>Vertebrata</taxon>
        <taxon>Euteleostomi</taxon>
        <taxon>Mammalia</taxon>
        <taxon>Eutheria</taxon>
        <taxon>Euarchontoglires</taxon>
        <taxon>Primates</taxon>
        <taxon>Haplorrhini</taxon>
        <taxon>Catarrhini</taxon>
        <taxon>Hominidae</taxon>
        <taxon>Homo</taxon>
    </lineage>
</organism>
<comment type="similarity">
    <text evidence="2">Belongs to the S-100 family.</text>
</comment>
<proteinExistence type="evidence at protein level"/>
<keyword id="KW-1267">Proteomics identification</keyword>
<keyword id="KW-1185">Reference proteome</keyword>
<sequence>MPQLLRNVLCVIETFHKYASEDSNGATLTGRELKQLIQGEFGDFFQPCVLHAVEKNSNLLNIDSNGIISFDEFVLAIFNLLNLCYLDIKSLLSSELRQVTKPEKEKLDDVDVQATTGDGQWTVGTSPTQEKRMLPSGMASSSQLIPEESGAVGNNRVDPWREAKTHNFPGEASEHNDPKNKHLEGDEQSQEVAQDIQTTEDNEGQLKTNKPMAGSKKTSSPTERKGQDKEISQEGDEPAREQSVSKIRDQFGEQEGNLATQSSPPKEATQRPCEDQEVRTEKEKHSNIQEPPLQREDEPSSQHADLPEQAAARSPSQTQKSTDSKDVCRMFDTQEPGKDADQTPAKTKNLGEPEDYGRTSETQEKECETKDLPVQYGSRNGSETSDMRDERKERRGPEAHGTAGQKERDRKTRPLVLETQTQDGKYQELQGLSKSKDAEKGSETQYLSSEGGDQTHPELEGTAVSGEEAEHTKEGTAEAFVNSKNAPAAERTLGARERTQDLAPLEKQSVGENTRVTKTHDQPVEEEDGYQGEDPESPFTQSDEGSSETPNSLASEEGNSSSETGELPVQGDSQSQGDQHGESVQGGHNNNPDTQRQGTPGEKNRALEAVVPAVRGEDVQLTEDQEQPARGEHKNQGPGTKGPGAAVEPNGHPEAQESTAGDENRKSLEIEITGALDEDFTDQLSLMQLPGKGDSRNELKVQGPSSKEEKGRATEAQNTLLESLDEDNSASLKIQLETKEPVTSEEEDESPQELAGEGGDQKSPAKKEHNSSVPWSSLEKQMQRDQEPCSVERGAVYSSPLYQYLQEKILQQTNVTQEEHQKQVQIAQASGPELCSVSLTSEISDCSVFFNYSQASQPYTRGLPLDESPAGAQETPAPQALEDKQGHPQRERLVLQREASTTKQ</sequence>
<reference key="1">
    <citation type="submission" date="2003-11" db="EMBL/GenBank/DDBJ databases">
        <title>Human intermediate filament-associated protein family.</title>
        <authorList>
            <person name="Wu Z."/>
            <person name="Schroeder J.M."/>
        </authorList>
    </citation>
    <scope>NUCLEOTIDE SEQUENCE [MRNA]</scope>
    <source>
        <tissue>Skin</tissue>
    </source>
</reference>
<reference key="2">
    <citation type="journal article" date="2006" name="Nature">
        <title>The DNA sequence and biological annotation of human chromosome 1.</title>
        <authorList>
            <person name="Gregory S.G."/>
            <person name="Barlow K.F."/>
            <person name="McLay K.E."/>
            <person name="Kaul R."/>
            <person name="Swarbreck D."/>
            <person name="Dunham A."/>
            <person name="Scott C.E."/>
            <person name="Howe K.L."/>
            <person name="Woodfine K."/>
            <person name="Spencer C.C.A."/>
            <person name="Jones M.C."/>
            <person name="Gillson C."/>
            <person name="Searle S."/>
            <person name="Zhou Y."/>
            <person name="Kokocinski F."/>
            <person name="McDonald L."/>
            <person name="Evans R."/>
            <person name="Phillips K."/>
            <person name="Atkinson A."/>
            <person name="Cooper R."/>
            <person name="Jones C."/>
            <person name="Hall R.E."/>
            <person name="Andrews T.D."/>
            <person name="Lloyd C."/>
            <person name="Ainscough R."/>
            <person name="Almeida J.P."/>
            <person name="Ambrose K.D."/>
            <person name="Anderson F."/>
            <person name="Andrew R.W."/>
            <person name="Ashwell R.I.S."/>
            <person name="Aubin K."/>
            <person name="Babbage A.K."/>
            <person name="Bagguley C.L."/>
            <person name="Bailey J."/>
            <person name="Beasley H."/>
            <person name="Bethel G."/>
            <person name="Bird C.P."/>
            <person name="Bray-Allen S."/>
            <person name="Brown J.Y."/>
            <person name="Brown A.J."/>
            <person name="Buckley D."/>
            <person name="Burton J."/>
            <person name="Bye J."/>
            <person name="Carder C."/>
            <person name="Chapman J.C."/>
            <person name="Clark S.Y."/>
            <person name="Clarke G."/>
            <person name="Clee C."/>
            <person name="Cobley V."/>
            <person name="Collier R.E."/>
            <person name="Corby N."/>
            <person name="Coville G.J."/>
            <person name="Davies J."/>
            <person name="Deadman R."/>
            <person name="Dunn M."/>
            <person name="Earthrowl M."/>
            <person name="Ellington A.G."/>
            <person name="Errington H."/>
            <person name="Frankish A."/>
            <person name="Frankland J."/>
            <person name="French L."/>
            <person name="Garner P."/>
            <person name="Garnett J."/>
            <person name="Gay L."/>
            <person name="Ghori M.R.J."/>
            <person name="Gibson R."/>
            <person name="Gilby L.M."/>
            <person name="Gillett W."/>
            <person name="Glithero R.J."/>
            <person name="Grafham D.V."/>
            <person name="Griffiths C."/>
            <person name="Griffiths-Jones S."/>
            <person name="Grocock R."/>
            <person name="Hammond S."/>
            <person name="Harrison E.S.I."/>
            <person name="Hart E."/>
            <person name="Haugen E."/>
            <person name="Heath P.D."/>
            <person name="Holmes S."/>
            <person name="Holt K."/>
            <person name="Howden P.J."/>
            <person name="Hunt A.R."/>
            <person name="Hunt S.E."/>
            <person name="Hunter G."/>
            <person name="Isherwood J."/>
            <person name="James R."/>
            <person name="Johnson C."/>
            <person name="Johnson D."/>
            <person name="Joy A."/>
            <person name="Kay M."/>
            <person name="Kershaw J.K."/>
            <person name="Kibukawa M."/>
            <person name="Kimberley A.M."/>
            <person name="King A."/>
            <person name="Knights A.J."/>
            <person name="Lad H."/>
            <person name="Laird G."/>
            <person name="Lawlor S."/>
            <person name="Leongamornlert D.A."/>
            <person name="Lloyd D.M."/>
            <person name="Loveland J."/>
            <person name="Lovell J."/>
            <person name="Lush M.J."/>
            <person name="Lyne R."/>
            <person name="Martin S."/>
            <person name="Mashreghi-Mohammadi M."/>
            <person name="Matthews L."/>
            <person name="Matthews N.S.W."/>
            <person name="McLaren S."/>
            <person name="Milne S."/>
            <person name="Mistry S."/>
            <person name="Moore M.J.F."/>
            <person name="Nickerson T."/>
            <person name="O'Dell C.N."/>
            <person name="Oliver K."/>
            <person name="Palmeiri A."/>
            <person name="Palmer S.A."/>
            <person name="Parker A."/>
            <person name="Patel D."/>
            <person name="Pearce A.V."/>
            <person name="Peck A.I."/>
            <person name="Pelan S."/>
            <person name="Phelps K."/>
            <person name="Phillimore B.J."/>
            <person name="Plumb R."/>
            <person name="Rajan J."/>
            <person name="Raymond C."/>
            <person name="Rouse G."/>
            <person name="Saenphimmachak C."/>
            <person name="Sehra H.K."/>
            <person name="Sheridan E."/>
            <person name="Shownkeen R."/>
            <person name="Sims S."/>
            <person name="Skuce C.D."/>
            <person name="Smith M."/>
            <person name="Steward C."/>
            <person name="Subramanian S."/>
            <person name="Sycamore N."/>
            <person name="Tracey A."/>
            <person name="Tromans A."/>
            <person name="Van Helmond Z."/>
            <person name="Wall M."/>
            <person name="Wallis J.M."/>
            <person name="White S."/>
            <person name="Whitehead S.L."/>
            <person name="Wilkinson J.E."/>
            <person name="Willey D.L."/>
            <person name="Williams H."/>
            <person name="Wilming L."/>
            <person name="Wray P.W."/>
            <person name="Wu Z."/>
            <person name="Coulson A."/>
            <person name="Vaudin M."/>
            <person name="Sulston J.E."/>
            <person name="Durbin R.M."/>
            <person name="Hubbard T."/>
            <person name="Wooster R."/>
            <person name="Dunham I."/>
            <person name="Carter N.P."/>
            <person name="McVean G."/>
            <person name="Ross M.T."/>
            <person name="Harrow J."/>
            <person name="Olson M.V."/>
            <person name="Beck S."/>
            <person name="Rogers J."/>
            <person name="Bentley D.R."/>
        </authorList>
    </citation>
    <scope>NUCLEOTIDE SEQUENCE [LARGE SCALE GENOMIC DNA]</scope>
</reference>
<reference key="3">
    <citation type="submission" date="2005-09" db="EMBL/GenBank/DDBJ databases">
        <authorList>
            <person name="Mural R.J."/>
            <person name="Istrail S."/>
            <person name="Sutton G.G."/>
            <person name="Florea L."/>
            <person name="Halpern A.L."/>
            <person name="Mobarry C.M."/>
            <person name="Lippert R."/>
            <person name="Walenz B."/>
            <person name="Shatkay H."/>
            <person name="Dew I."/>
            <person name="Miller J.R."/>
            <person name="Flanigan M.J."/>
            <person name="Edwards N.J."/>
            <person name="Bolanos R."/>
            <person name="Fasulo D."/>
            <person name="Halldorsson B.V."/>
            <person name="Hannenhalli S."/>
            <person name="Turner R."/>
            <person name="Yooseph S."/>
            <person name="Lu F."/>
            <person name="Nusskern D.R."/>
            <person name="Shue B.C."/>
            <person name="Zheng X.H."/>
            <person name="Zhong F."/>
            <person name="Delcher A.L."/>
            <person name="Huson D.H."/>
            <person name="Kravitz S.A."/>
            <person name="Mouchard L."/>
            <person name="Reinert K."/>
            <person name="Remington K.A."/>
            <person name="Clark A.G."/>
            <person name="Waterman M.S."/>
            <person name="Eichler E.E."/>
            <person name="Adams M.D."/>
            <person name="Hunkapiller M.W."/>
            <person name="Myers E.W."/>
            <person name="Venter J.C."/>
        </authorList>
    </citation>
    <scope>NUCLEOTIDE SEQUENCE [LARGE SCALE GENOMIC DNA]</scope>
</reference>
<reference key="4">
    <citation type="journal article" date="2004" name="Genome Res.">
        <title>The status, quality, and expansion of the NIH full-length cDNA project: the Mammalian Gene Collection (MGC).</title>
        <authorList>
            <consortium name="The MGC Project Team"/>
        </authorList>
    </citation>
    <scope>NUCLEOTIDE SEQUENCE [LARGE SCALE MRNA]</scope>
</reference>
<feature type="chain" id="PRO_0000341543" description="Trichohyalin-like protein 1">
    <location>
        <begin position="1"/>
        <end position="904"/>
    </location>
</feature>
<feature type="domain" description="EF-hand">
    <location>
        <begin position="48"/>
        <end position="83"/>
    </location>
</feature>
<feature type="region of interest" description="Disordered" evidence="1">
    <location>
        <begin position="102"/>
        <end position="792"/>
    </location>
</feature>
<feature type="region of interest" description="Disordered" evidence="1">
    <location>
        <begin position="858"/>
        <end position="890"/>
    </location>
</feature>
<feature type="compositionally biased region" description="Polar residues" evidence="1">
    <location>
        <begin position="113"/>
        <end position="128"/>
    </location>
</feature>
<feature type="compositionally biased region" description="Basic and acidic residues" evidence="1">
    <location>
        <begin position="172"/>
        <end position="185"/>
    </location>
</feature>
<feature type="compositionally biased region" description="Basic and acidic residues" evidence="1">
    <location>
        <begin position="222"/>
        <end position="240"/>
    </location>
</feature>
<feature type="compositionally biased region" description="Basic and acidic residues" evidence="1">
    <location>
        <begin position="268"/>
        <end position="300"/>
    </location>
</feature>
<feature type="compositionally biased region" description="Basic and acidic residues" evidence="1">
    <location>
        <begin position="349"/>
        <end position="371"/>
    </location>
</feature>
<feature type="compositionally biased region" description="Basic and acidic residues" evidence="1">
    <location>
        <begin position="385"/>
        <end position="398"/>
    </location>
</feature>
<feature type="compositionally biased region" description="Polar residues" evidence="1">
    <location>
        <begin position="443"/>
        <end position="452"/>
    </location>
</feature>
<feature type="compositionally biased region" description="Acidic residues" evidence="1">
    <location>
        <begin position="524"/>
        <end position="536"/>
    </location>
</feature>
<feature type="compositionally biased region" description="Polar residues" evidence="1">
    <location>
        <begin position="538"/>
        <end position="554"/>
    </location>
</feature>
<feature type="compositionally biased region" description="Low complexity" evidence="1">
    <location>
        <begin position="555"/>
        <end position="578"/>
    </location>
</feature>
<feature type="compositionally biased region" description="Polar residues" evidence="1">
    <location>
        <begin position="586"/>
        <end position="598"/>
    </location>
</feature>
<feature type="compositionally biased region" description="Basic and acidic residues" evidence="1">
    <location>
        <begin position="759"/>
        <end position="770"/>
    </location>
</feature>
<feature type="compositionally biased region" description="Polar residues" evidence="1">
    <location>
        <begin position="771"/>
        <end position="780"/>
    </location>
</feature>
<feature type="compositionally biased region" description="Basic and acidic residues" evidence="1">
    <location>
        <begin position="881"/>
        <end position="890"/>
    </location>
</feature>
<feature type="sequence variant" id="VAR_044083" description="In dbSNP:rs16833835.">
    <original>A</original>
    <variation>G</variation>
    <location>
        <position position="193"/>
    </location>
</feature>